<evidence type="ECO:0000250" key="1">
    <source>
        <dbReference type="UniProtKB" id="Q9D517"/>
    </source>
</evidence>
<evidence type="ECO:0000250" key="2">
    <source>
        <dbReference type="UniProtKB" id="Q9NUQ2"/>
    </source>
</evidence>
<evidence type="ECO:0000255" key="3"/>
<evidence type="ECO:0000269" key="4">
    <source>
    </source>
</evidence>
<evidence type="ECO:0000305" key="5"/>
<evidence type="ECO:0000305" key="6">
    <source>
    </source>
</evidence>
<feature type="chain" id="PRO_0000208201" description="1-acyl-sn-glycerol-3-phosphate acyltransferase epsilon">
    <location>
        <begin position="1"/>
        <end position="365"/>
    </location>
</feature>
<feature type="transmembrane region" description="Helical" evidence="3">
    <location>
        <begin position="15"/>
        <end position="35"/>
    </location>
</feature>
<feature type="transmembrane region" description="Helical" evidence="3">
    <location>
        <begin position="345"/>
        <end position="365"/>
    </location>
</feature>
<feature type="short sequence motif" description="HXXXXD motif" evidence="1">
    <location>
        <begin position="93"/>
        <end position="98"/>
    </location>
</feature>
<feature type="sequence conflict" description="In Ref. 1; AAN75571." evidence="5" ref="1">
    <original>L</original>
    <variation>W</variation>
    <location>
        <position position="80"/>
    </location>
</feature>
<feature type="sequence conflict" description="In Ref. 1; AAN75571." evidence="5" ref="1">
    <original>L</original>
    <variation>M</variation>
    <location>
        <position position="128"/>
    </location>
</feature>
<gene>
    <name type="primary">Agpat5</name>
    <name type="synonym">D8Ertd319e</name>
</gene>
<protein>
    <recommendedName>
        <fullName>1-acyl-sn-glycerol-3-phosphate acyltransferase epsilon</fullName>
        <ecNumber evidence="4">2.3.1.51</ecNumber>
    </recommendedName>
    <alternativeName>
        <fullName>1-acylglycerol-3-phosphate O-acyltransferase 5</fullName>
        <shortName>1-AGP acyltransferase 5</shortName>
        <shortName>1-AGPAT 5</shortName>
    </alternativeName>
    <alternativeName>
        <fullName>Lysophosphatidic acid acyltransferase epsilon</fullName>
        <shortName>LPAAT-epsilon</shortName>
    </alternativeName>
</protein>
<reference key="1">
    <citation type="submission" date="2002-10" db="EMBL/GenBank/DDBJ databases">
        <title>Identification and characterization of 1-acylglycerolphosphate acyltransferase-epsilon.</title>
        <authorList>
            <person name="Lu B."/>
            <person name="Jiang Y.J."/>
            <person name="Chan M."/>
            <person name="Choy P.C."/>
        </authorList>
    </citation>
    <scope>NUCLEOTIDE SEQUENCE [MRNA]</scope>
    <source>
        <strain>NMRI</strain>
    </source>
</reference>
<reference key="2">
    <citation type="journal article" date="2005" name="Science">
        <title>The transcriptional landscape of the mammalian genome.</title>
        <authorList>
            <person name="Carninci P."/>
            <person name="Kasukawa T."/>
            <person name="Katayama S."/>
            <person name="Gough J."/>
            <person name="Frith M.C."/>
            <person name="Maeda N."/>
            <person name="Oyama R."/>
            <person name="Ravasi T."/>
            <person name="Lenhard B."/>
            <person name="Wells C."/>
            <person name="Kodzius R."/>
            <person name="Shimokawa K."/>
            <person name="Bajic V.B."/>
            <person name="Brenner S.E."/>
            <person name="Batalov S."/>
            <person name="Forrest A.R."/>
            <person name="Zavolan M."/>
            <person name="Davis M.J."/>
            <person name="Wilming L.G."/>
            <person name="Aidinis V."/>
            <person name="Allen J.E."/>
            <person name="Ambesi-Impiombato A."/>
            <person name="Apweiler R."/>
            <person name="Aturaliya R.N."/>
            <person name="Bailey T.L."/>
            <person name="Bansal M."/>
            <person name="Baxter L."/>
            <person name="Beisel K.W."/>
            <person name="Bersano T."/>
            <person name="Bono H."/>
            <person name="Chalk A.M."/>
            <person name="Chiu K.P."/>
            <person name="Choudhary V."/>
            <person name="Christoffels A."/>
            <person name="Clutterbuck D.R."/>
            <person name="Crowe M.L."/>
            <person name="Dalla E."/>
            <person name="Dalrymple B.P."/>
            <person name="de Bono B."/>
            <person name="Della Gatta G."/>
            <person name="di Bernardo D."/>
            <person name="Down T."/>
            <person name="Engstrom P."/>
            <person name="Fagiolini M."/>
            <person name="Faulkner G."/>
            <person name="Fletcher C.F."/>
            <person name="Fukushima T."/>
            <person name="Furuno M."/>
            <person name="Futaki S."/>
            <person name="Gariboldi M."/>
            <person name="Georgii-Hemming P."/>
            <person name="Gingeras T.R."/>
            <person name="Gojobori T."/>
            <person name="Green R.E."/>
            <person name="Gustincich S."/>
            <person name="Harbers M."/>
            <person name="Hayashi Y."/>
            <person name="Hensch T.K."/>
            <person name="Hirokawa N."/>
            <person name="Hill D."/>
            <person name="Huminiecki L."/>
            <person name="Iacono M."/>
            <person name="Ikeo K."/>
            <person name="Iwama A."/>
            <person name="Ishikawa T."/>
            <person name="Jakt M."/>
            <person name="Kanapin A."/>
            <person name="Katoh M."/>
            <person name="Kawasawa Y."/>
            <person name="Kelso J."/>
            <person name="Kitamura H."/>
            <person name="Kitano H."/>
            <person name="Kollias G."/>
            <person name="Krishnan S.P."/>
            <person name="Kruger A."/>
            <person name="Kummerfeld S.K."/>
            <person name="Kurochkin I.V."/>
            <person name="Lareau L.F."/>
            <person name="Lazarevic D."/>
            <person name="Lipovich L."/>
            <person name="Liu J."/>
            <person name="Liuni S."/>
            <person name="McWilliam S."/>
            <person name="Madan Babu M."/>
            <person name="Madera M."/>
            <person name="Marchionni L."/>
            <person name="Matsuda H."/>
            <person name="Matsuzawa S."/>
            <person name="Miki H."/>
            <person name="Mignone F."/>
            <person name="Miyake S."/>
            <person name="Morris K."/>
            <person name="Mottagui-Tabar S."/>
            <person name="Mulder N."/>
            <person name="Nakano N."/>
            <person name="Nakauchi H."/>
            <person name="Ng P."/>
            <person name="Nilsson R."/>
            <person name="Nishiguchi S."/>
            <person name="Nishikawa S."/>
            <person name="Nori F."/>
            <person name="Ohara O."/>
            <person name="Okazaki Y."/>
            <person name="Orlando V."/>
            <person name="Pang K.C."/>
            <person name="Pavan W.J."/>
            <person name="Pavesi G."/>
            <person name="Pesole G."/>
            <person name="Petrovsky N."/>
            <person name="Piazza S."/>
            <person name="Reed J."/>
            <person name="Reid J.F."/>
            <person name="Ring B.Z."/>
            <person name="Ringwald M."/>
            <person name="Rost B."/>
            <person name="Ruan Y."/>
            <person name="Salzberg S.L."/>
            <person name="Sandelin A."/>
            <person name="Schneider C."/>
            <person name="Schoenbach C."/>
            <person name="Sekiguchi K."/>
            <person name="Semple C.A."/>
            <person name="Seno S."/>
            <person name="Sessa L."/>
            <person name="Sheng Y."/>
            <person name="Shibata Y."/>
            <person name="Shimada H."/>
            <person name="Shimada K."/>
            <person name="Silva D."/>
            <person name="Sinclair B."/>
            <person name="Sperling S."/>
            <person name="Stupka E."/>
            <person name="Sugiura K."/>
            <person name="Sultana R."/>
            <person name="Takenaka Y."/>
            <person name="Taki K."/>
            <person name="Tammoja K."/>
            <person name="Tan S.L."/>
            <person name="Tang S."/>
            <person name="Taylor M.S."/>
            <person name="Tegner J."/>
            <person name="Teichmann S.A."/>
            <person name="Ueda H.R."/>
            <person name="van Nimwegen E."/>
            <person name="Verardo R."/>
            <person name="Wei C.L."/>
            <person name="Yagi K."/>
            <person name="Yamanishi H."/>
            <person name="Zabarovsky E."/>
            <person name="Zhu S."/>
            <person name="Zimmer A."/>
            <person name="Hide W."/>
            <person name="Bult C."/>
            <person name="Grimmond S.M."/>
            <person name="Teasdale R.D."/>
            <person name="Liu E.T."/>
            <person name="Brusic V."/>
            <person name="Quackenbush J."/>
            <person name="Wahlestedt C."/>
            <person name="Mattick J.S."/>
            <person name="Hume D.A."/>
            <person name="Kai C."/>
            <person name="Sasaki D."/>
            <person name="Tomaru Y."/>
            <person name="Fukuda S."/>
            <person name="Kanamori-Katayama M."/>
            <person name="Suzuki M."/>
            <person name="Aoki J."/>
            <person name="Arakawa T."/>
            <person name="Iida J."/>
            <person name="Imamura K."/>
            <person name="Itoh M."/>
            <person name="Kato T."/>
            <person name="Kawaji H."/>
            <person name="Kawagashira N."/>
            <person name="Kawashima T."/>
            <person name="Kojima M."/>
            <person name="Kondo S."/>
            <person name="Konno H."/>
            <person name="Nakano K."/>
            <person name="Ninomiya N."/>
            <person name="Nishio T."/>
            <person name="Okada M."/>
            <person name="Plessy C."/>
            <person name="Shibata K."/>
            <person name="Shiraki T."/>
            <person name="Suzuki S."/>
            <person name="Tagami M."/>
            <person name="Waki K."/>
            <person name="Watahiki A."/>
            <person name="Okamura-Oho Y."/>
            <person name="Suzuki H."/>
            <person name="Kawai J."/>
            <person name="Hayashizaki Y."/>
        </authorList>
    </citation>
    <scope>NUCLEOTIDE SEQUENCE [LARGE SCALE MRNA]</scope>
    <source>
        <strain>C57BL/6J</strain>
        <strain>NOD</strain>
        <tissue>Bone marrow</tissue>
        <tissue>Cerebellum</tissue>
        <tissue>Dendritic cell</tissue>
        <tissue>Embryo</tissue>
        <tissue>Spleen</tissue>
    </source>
</reference>
<reference key="3">
    <citation type="journal article" date="2004" name="Genome Res.">
        <title>The status, quality, and expansion of the NIH full-length cDNA project: the Mammalian Gene Collection (MGC).</title>
        <authorList>
            <consortium name="The MGC Project Team"/>
        </authorList>
    </citation>
    <scope>NUCLEOTIDE SEQUENCE [LARGE SCALE MRNA]</scope>
    <source>
        <strain>Czech II</strain>
        <tissue>Mammary gland</tissue>
    </source>
</reference>
<reference key="4">
    <citation type="journal article" date="2005" name="Biochem. J.">
        <title>Cloning and characterization of murine 1-acyl-sn-glycerol 3-phosphate acyltransferases and their regulation by PPARalpha in murine heart.</title>
        <authorList>
            <person name="Lu B."/>
            <person name="Jiang Y.J."/>
            <person name="Zhou Y."/>
            <person name="Xu F.Y."/>
            <person name="Hatch G.M."/>
            <person name="Choy P.C."/>
        </authorList>
    </citation>
    <scope>FUNCTION</scope>
    <scope>CATALYTIC ACTIVITY</scope>
    <scope>TISSUE SPECIFICITY</scope>
    <source>
        <strain>C57BL/6J</strain>
    </source>
</reference>
<proteinExistence type="evidence at protein level"/>
<keyword id="KW-0012">Acyltransferase</keyword>
<keyword id="KW-0256">Endoplasmic reticulum</keyword>
<keyword id="KW-0444">Lipid biosynthesis</keyword>
<keyword id="KW-0443">Lipid metabolism</keyword>
<keyword id="KW-0472">Membrane</keyword>
<keyword id="KW-0496">Mitochondrion</keyword>
<keyword id="KW-0539">Nucleus</keyword>
<keyword id="KW-0594">Phospholipid biosynthesis</keyword>
<keyword id="KW-1208">Phospholipid metabolism</keyword>
<keyword id="KW-1185">Reference proteome</keyword>
<keyword id="KW-0808">Transferase</keyword>
<keyword id="KW-0812">Transmembrane</keyword>
<keyword id="KW-1133">Transmembrane helix</keyword>
<dbReference type="EC" id="2.3.1.51" evidence="4"/>
<dbReference type="EMBL" id="AY161042">
    <property type="protein sequence ID" value="AAN75571.1"/>
    <property type="molecule type" value="mRNA"/>
</dbReference>
<dbReference type="EMBL" id="AK003649">
    <property type="protein sequence ID" value="BAB22915.2"/>
    <property type="molecule type" value="mRNA"/>
</dbReference>
<dbReference type="EMBL" id="AK082137">
    <property type="protein sequence ID" value="BAC38421.1"/>
    <property type="molecule type" value="mRNA"/>
</dbReference>
<dbReference type="EMBL" id="AK089885">
    <property type="protein sequence ID" value="BAC40983.1"/>
    <property type="molecule type" value="mRNA"/>
</dbReference>
<dbReference type="EMBL" id="AK152709">
    <property type="protein sequence ID" value="BAE31436.1"/>
    <property type="molecule type" value="mRNA"/>
</dbReference>
<dbReference type="EMBL" id="AK152889">
    <property type="protein sequence ID" value="BAE31572.1"/>
    <property type="molecule type" value="mRNA"/>
</dbReference>
<dbReference type="EMBL" id="AK155378">
    <property type="protein sequence ID" value="BAE33229.1"/>
    <property type="molecule type" value="mRNA"/>
</dbReference>
<dbReference type="EMBL" id="BC031987">
    <property type="protein sequence ID" value="AAH31987.2"/>
    <property type="molecule type" value="mRNA"/>
</dbReference>
<dbReference type="CCDS" id="CCDS22126.1"/>
<dbReference type="RefSeq" id="NP_081068.1">
    <property type="nucleotide sequence ID" value="NM_026792.3"/>
</dbReference>
<dbReference type="BioGRID" id="206392">
    <property type="interactions" value="4"/>
</dbReference>
<dbReference type="FunCoup" id="Q9D1E8">
    <property type="interactions" value="2710"/>
</dbReference>
<dbReference type="IntAct" id="Q9D1E8">
    <property type="interactions" value="1"/>
</dbReference>
<dbReference type="STRING" id="10090.ENSMUSP00000117025"/>
<dbReference type="iPTMnet" id="Q9D1E8"/>
<dbReference type="PhosphoSitePlus" id="Q9D1E8"/>
<dbReference type="PaxDb" id="10090-ENSMUSP00000117025"/>
<dbReference type="ProteomicsDB" id="289924"/>
<dbReference type="Pumba" id="Q9D1E8"/>
<dbReference type="Antibodypedia" id="2138">
    <property type="antibodies" value="316 antibodies from 27 providers"/>
</dbReference>
<dbReference type="Ensembl" id="ENSMUST00000149565.8">
    <property type="protein sequence ID" value="ENSMUSP00000117025.2"/>
    <property type="gene ID" value="ENSMUSG00000031467.11"/>
</dbReference>
<dbReference type="GeneID" id="52123"/>
<dbReference type="KEGG" id="mmu:52123"/>
<dbReference type="UCSC" id="uc009kzv.1">
    <property type="organism name" value="mouse"/>
</dbReference>
<dbReference type="AGR" id="MGI:1196345"/>
<dbReference type="CTD" id="55326"/>
<dbReference type="MGI" id="MGI:1196345">
    <property type="gene designation" value="Agpat5"/>
</dbReference>
<dbReference type="VEuPathDB" id="HostDB:ENSMUSG00000031467"/>
<dbReference type="eggNOG" id="KOG1505">
    <property type="taxonomic scope" value="Eukaryota"/>
</dbReference>
<dbReference type="GeneTree" id="ENSGT00950000182836"/>
<dbReference type="InParanoid" id="Q9D1E8"/>
<dbReference type="OMA" id="HRSTVDW"/>
<dbReference type="OrthoDB" id="189226at2759"/>
<dbReference type="PhylomeDB" id="Q9D1E8"/>
<dbReference type="TreeFam" id="TF314346"/>
<dbReference type="Reactome" id="R-MMU-1483166">
    <property type="pathway name" value="Synthesis of PA"/>
</dbReference>
<dbReference type="UniPathway" id="UPA00557">
    <property type="reaction ID" value="UER00613"/>
</dbReference>
<dbReference type="BioGRID-ORCS" id="52123">
    <property type="hits" value="3 hits in 78 CRISPR screens"/>
</dbReference>
<dbReference type="CD-CODE" id="CE726F99">
    <property type="entry name" value="Postsynaptic density"/>
</dbReference>
<dbReference type="ChiTaRS" id="Agpat5">
    <property type="organism name" value="mouse"/>
</dbReference>
<dbReference type="PRO" id="PR:Q9D1E8"/>
<dbReference type="Proteomes" id="UP000000589">
    <property type="component" value="Chromosome 8"/>
</dbReference>
<dbReference type="RNAct" id="Q9D1E8">
    <property type="molecule type" value="protein"/>
</dbReference>
<dbReference type="Bgee" id="ENSMUSG00000031467">
    <property type="expression patterns" value="Expressed in triceps brachii and 270 other cell types or tissues"/>
</dbReference>
<dbReference type="ExpressionAtlas" id="Q9D1E8">
    <property type="expression patterns" value="baseline and differential"/>
</dbReference>
<dbReference type="GO" id="GO:0005789">
    <property type="term" value="C:endoplasmic reticulum membrane"/>
    <property type="evidence" value="ECO:0000250"/>
    <property type="project" value="UniProtKB"/>
</dbReference>
<dbReference type="GO" id="GO:0005739">
    <property type="term" value="C:mitochondrion"/>
    <property type="evidence" value="ECO:0007005"/>
    <property type="project" value="MGI"/>
</dbReference>
<dbReference type="GO" id="GO:0005635">
    <property type="term" value="C:nuclear envelope"/>
    <property type="evidence" value="ECO:0000250"/>
    <property type="project" value="UniProtKB"/>
</dbReference>
<dbReference type="GO" id="GO:0005730">
    <property type="term" value="C:nucleolus"/>
    <property type="evidence" value="ECO:0007669"/>
    <property type="project" value="Ensembl"/>
</dbReference>
<dbReference type="GO" id="GO:0003841">
    <property type="term" value="F:1-acylglycerol-3-phosphate O-acyltransferase activity"/>
    <property type="evidence" value="ECO:0000314"/>
    <property type="project" value="MGI"/>
</dbReference>
<dbReference type="GO" id="GO:0006639">
    <property type="term" value="P:acylglycerol metabolic process"/>
    <property type="evidence" value="ECO:0000314"/>
    <property type="project" value="MGI"/>
</dbReference>
<dbReference type="GO" id="GO:0016024">
    <property type="term" value="P:CDP-diacylglycerol biosynthetic process"/>
    <property type="evidence" value="ECO:0007669"/>
    <property type="project" value="UniProtKB-UniPathway"/>
</dbReference>
<dbReference type="GO" id="GO:0002244">
    <property type="term" value="P:hematopoietic progenitor cell differentiation"/>
    <property type="evidence" value="ECO:0000316"/>
    <property type="project" value="MGI"/>
</dbReference>
<dbReference type="CDD" id="cd07990">
    <property type="entry name" value="LPLAT_LCLAT1-like"/>
    <property type="match status" value="1"/>
</dbReference>
<dbReference type="InterPro" id="IPR032098">
    <property type="entry name" value="Acyltransf_C"/>
</dbReference>
<dbReference type="InterPro" id="IPR002123">
    <property type="entry name" value="Plipid/glycerol_acylTrfase"/>
</dbReference>
<dbReference type="PANTHER" id="PTHR10983:SF73">
    <property type="entry name" value="1-ACYL-SN-GLYCEROL-3-PHOSPHATE ACYLTRANSFERASE EPSILON"/>
    <property type="match status" value="1"/>
</dbReference>
<dbReference type="PANTHER" id="PTHR10983">
    <property type="entry name" value="1-ACYLGLYCEROL-3-PHOSPHATE ACYLTRANSFERASE-RELATED"/>
    <property type="match status" value="1"/>
</dbReference>
<dbReference type="Pfam" id="PF16076">
    <property type="entry name" value="Acyltransf_C"/>
    <property type="match status" value="1"/>
</dbReference>
<dbReference type="Pfam" id="PF01553">
    <property type="entry name" value="Acyltransferase"/>
    <property type="match status" value="1"/>
</dbReference>
<dbReference type="SMART" id="SM00563">
    <property type="entry name" value="PlsC"/>
    <property type="match status" value="1"/>
</dbReference>
<dbReference type="SUPFAM" id="SSF69593">
    <property type="entry name" value="Glycerol-3-phosphate (1)-acyltransferase"/>
    <property type="match status" value="1"/>
</dbReference>
<sequence>MLLSLVLHTYSMRYLLPSVLLLGSAPTYLLAWTLWRVLSALMPARLYQRVDDRLYCVYQNMVLFFFENYTGVQILLYGDLPKNKENVIYLANHQSTVDWIVADMLAARQDALGHVRYVLKDKLKWLPLYGFYFAQHGGIYVKRSAKFNDKEMRSKLQSYVNAGTPMYLVIFPEGTRYNATYTKLLSASQAFAAQRGLAVLKHVLTPRIKATHVAFDSMKSHLDAIYDVTVVYEGNEKGSGKYSNPPSMTEFLCKQCPKLHIHFDRIDRNEVPEEQEHMKKWLHERFEIKDRLLIEFYDSPDPERRNKFPGKSVHSRLSVKKTLPSVLILGSLTAVMLMTESGRKLYMGTWLYGTLLGCLWFVIKA</sequence>
<name>PLCE_MOUSE</name>
<comment type="function">
    <text evidence="2 4">Converts 1-acyl-sn-glycerol-3-phosphate (lysophosphatidic acid or LPA) into 1,2-diacyl-sn-glycerol-3-phosphate (phosphatidic acid or PA) by incorporating an acyl moiety at the sn-2 position of the glycerol backbone (PubMed:15367102). Acts on LPA containing saturated or unsaturated fatty acids C15:0-C20:4 at the sn-1 position using C18:1-CoA as the acyl donor (By similarity). Also acts on lysophosphatidylethanolamine using oleoyl-CoA, but not arachidonoyl-CoA, and lysophosphatidylinositol using arachidonoyl-CoA, but not oleoyl-CoA (By similarity). Activity toward lysophosphatidylglycerol not detectable (By similarity).</text>
</comment>
<comment type="catalytic activity">
    <reaction evidence="4">
        <text>a 1-acyl-sn-glycero-3-phosphate + an acyl-CoA = a 1,2-diacyl-sn-glycero-3-phosphate + CoA</text>
        <dbReference type="Rhea" id="RHEA:19709"/>
        <dbReference type="ChEBI" id="CHEBI:57287"/>
        <dbReference type="ChEBI" id="CHEBI:57970"/>
        <dbReference type="ChEBI" id="CHEBI:58342"/>
        <dbReference type="ChEBI" id="CHEBI:58608"/>
        <dbReference type="EC" id="2.3.1.51"/>
    </reaction>
    <physiologicalReaction direction="left-to-right" evidence="6">
        <dbReference type="Rhea" id="RHEA:19710"/>
    </physiologicalReaction>
</comment>
<comment type="catalytic activity">
    <reaction evidence="2">
        <text>1-(9Z-octadecenoyl)-sn-glycero-3-phosphate + tetradecanoyl-CoA = 1-(9Z)-octadecenoyl-2-tetradecanoyl-sn-glycero-3-phosphate + CoA</text>
        <dbReference type="Rhea" id="RHEA:37171"/>
        <dbReference type="ChEBI" id="CHEBI:57287"/>
        <dbReference type="ChEBI" id="CHEBI:57385"/>
        <dbReference type="ChEBI" id="CHEBI:74544"/>
        <dbReference type="ChEBI" id="CHEBI:74579"/>
    </reaction>
    <physiologicalReaction direction="left-to-right" evidence="2">
        <dbReference type="Rhea" id="RHEA:37172"/>
    </physiologicalReaction>
</comment>
<comment type="catalytic activity">
    <reaction evidence="2">
        <text>pentadecanoyl-CoA + 1-(9Z-octadecenoyl)-sn-glycero-3-phosphate = 1-(9Z)-octadecenoyl-2-pentadecanoyl-sn-glycero-3-phosphate + CoA</text>
        <dbReference type="Rhea" id="RHEA:37175"/>
        <dbReference type="ChEBI" id="CHEBI:57287"/>
        <dbReference type="ChEBI" id="CHEBI:74309"/>
        <dbReference type="ChEBI" id="CHEBI:74544"/>
        <dbReference type="ChEBI" id="CHEBI:74578"/>
    </reaction>
    <physiologicalReaction direction="left-to-right" evidence="2">
        <dbReference type="Rhea" id="RHEA:37176"/>
    </physiologicalReaction>
</comment>
<comment type="catalytic activity">
    <reaction evidence="2">
        <text>1-(9Z-octadecenoyl)-sn-glycero-3-phosphate + octadecanoyl-CoA = 1-(9Z-octadecenoyl)-2-octadecanoyl-sn-glycero-3-phosphate + CoA</text>
        <dbReference type="Rhea" id="RHEA:37147"/>
        <dbReference type="ChEBI" id="CHEBI:57287"/>
        <dbReference type="ChEBI" id="CHEBI:57394"/>
        <dbReference type="ChEBI" id="CHEBI:74544"/>
        <dbReference type="ChEBI" id="CHEBI:74552"/>
    </reaction>
    <physiologicalReaction direction="left-to-right" evidence="2">
        <dbReference type="Rhea" id="RHEA:37148"/>
    </physiologicalReaction>
</comment>
<comment type="catalytic activity">
    <reaction evidence="2">
        <text>nonadecanoyl-CoA + 1-(9Z-octadecenoyl)-sn-glycero-3-phosphate = 1-(9Z)-octadecenoyl-2-nonadecanoyl-sn-glycero-3-phosphate + CoA</text>
        <dbReference type="Rhea" id="RHEA:37595"/>
        <dbReference type="ChEBI" id="CHEBI:57287"/>
        <dbReference type="ChEBI" id="CHEBI:74544"/>
        <dbReference type="ChEBI" id="CHEBI:75104"/>
        <dbReference type="ChEBI" id="CHEBI:75105"/>
    </reaction>
    <physiologicalReaction direction="left-to-right" evidence="2">
        <dbReference type="Rhea" id="RHEA:37596"/>
    </physiologicalReaction>
</comment>
<comment type="catalytic activity">
    <reaction evidence="2">
        <text>1-(9Z-octadecenoyl)-sn-glycero-3-phosphoethanolamine + (9Z)-octadecenoyl-CoA = 1,2-di-(9Z-octadecenoyl)-sn-glycero-3-phosphoethanolamine + CoA</text>
        <dbReference type="Rhea" id="RHEA:37499"/>
        <dbReference type="ChEBI" id="CHEBI:57287"/>
        <dbReference type="ChEBI" id="CHEBI:57387"/>
        <dbReference type="ChEBI" id="CHEBI:74971"/>
        <dbReference type="ChEBI" id="CHEBI:74986"/>
    </reaction>
    <physiologicalReaction direction="left-to-right" evidence="2">
        <dbReference type="Rhea" id="RHEA:37500"/>
    </physiologicalReaction>
</comment>
<comment type="catalytic activity">
    <reaction evidence="2">
        <text>1-(9Z-octadecenoyl)-sn-glycero-3-phosphocholine + (9Z)-octadecenoyl-CoA = 1,2-di-(9Z-octadecenoyl)-sn-glycero-3-phosphocholine + CoA</text>
        <dbReference type="Rhea" id="RHEA:37387"/>
        <dbReference type="ChEBI" id="CHEBI:28610"/>
        <dbReference type="ChEBI" id="CHEBI:57287"/>
        <dbReference type="ChEBI" id="CHEBI:57387"/>
        <dbReference type="ChEBI" id="CHEBI:74669"/>
    </reaction>
    <physiologicalReaction direction="left-to-right" evidence="2">
        <dbReference type="Rhea" id="RHEA:37388"/>
    </physiologicalReaction>
</comment>
<comment type="catalytic activity">
    <reaction evidence="2">
        <text>1-(9Z-octadecenoyl)-sn-glycero-3-phospho-(1D-myo-inositol) + (5Z,8Z,11Z,14Z)-eicosatetraenoyl-CoA = 1-(9Z-octadecenoyl)-2-(5Z,8Z,11Z,14Z-eicosatetraenoyl)-sn-glycero-3-phospho-1D-myo-inositol + CoA</text>
        <dbReference type="Rhea" id="RHEA:42216"/>
        <dbReference type="ChEBI" id="CHEBI:57287"/>
        <dbReference type="ChEBI" id="CHEBI:57368"/>
        <dbReference type="ChEBI" id="CHEBI:78762"/>
        <dbReference type="ChEBI" id="CHEBI:78765"/>
    </reaction>
    <physiologicalReaction direction="left-to-right" evidence="2">
        <dbReference type="Rhea" id="RHEA:42217"/>
    </physiologicalReaction>
</comment>
<comment type="catalytic activity">
    <reaction evidence="2">
        <text>1-(9Z-octadecenoyl)-sn-glycero-3-phospho-L-serine + (9Z)-octadecenoyl-CoA = 1,2-di-(9Z)-octadecenoyl-sn-glycero-3-phospho-L-serine + CoA</text>
        <dbReference type="Rhea" id="RHEA:37407"/>
        <dbReference type="ChEBI" id="CHEBI:57287"/>
        <dbReference type="ChEBI" id="CHEBI:57387"/>
        <dbReference type="ChEBI" id="CHEBI:74617"/>
        <dbReference type="ChEBI" id="CHEBI:74905"/>
    </reaction>
    <physiologicalReaction direction="left-to-right" evidence="2">
        <dbReference type="Rhea" id="RHEA:37408"/>
    </physiologicalReaction>
</comment>
<comment type="catalytic activity">
    <reaction evidence="2">
        <text>1-(9Z-octadecenoyl)-sn-glycero-3-phospho-L-serine + (5Z,8Z,11Z,14Z)-eicosatetraenoyl-CoA = 1-(9Z-octadecenoyl)-2-(5Z,8Z,11Z,14Z-eicosatetraenoyl)-sn-glycero-3-phospho-L-serine + CoA</text>
        <dbReference type="Rhea" id="RHEA:37379"/>
        <dbReference type="ChEBI" id="CHEBI:57287"/>
        <dbReference type="ChEBI" id="CHEBI:57368"/>
        <dbReference type="ChEBI" id="CHEBI:74617"/>
        <dbReference type="ChEBI" id="CHEBI:74897"/>
    </reaction>
    <physiologicalReaction direction="left-to-right" evidence="2">
        <dbReference type="Rhea" id="RHEA:37380"/>
    </physiologicalReaction>
</comment>
<comment type="catalytic activity">
    <reaction evidence="2">
        <text>1-hexadecanoyl-sn-glycero-3-phosphate + (9Z)-octadecenoyl-CoA = 1-hexadecanoyl-2-(9Z-octadecenoyl)-sn-glycero-3-phosphate + CoA</text>
        <dbReference type="Rhea" id="RHEA:33187"/>
        <dbReference type="ChEBI" id="CHEBI:57287"/>
        <dbReference type="ChEBI" id="CHEBI:57387"/>
        <dbReference type="ChEBI" id="CHEBI:57518"/>
        <dbReference type="ChEBI" id="CHEBI:64839"/>
    </reaction>
    <physiologicalReaction direction="left-to-right" evidence="2">
        <dbReference type="Rhea" id="RHEA:33188"/>
    </physiologicalReaction>
</comment>
<comment type="catalytic activity">
    <reaction evidence="2">
        <text>1-heptadecanoyl-sn-glycero-3-phosphate + (9Z)-octadecenoyl-CoA = 1-heptadecanoyl-2-(9Z)-octadecenoyl-sn-glycero-3-phosphate + CoA</text>
        <dbReference type="Rhea" id="RHEA:37151"/>
        <dbReference type="ChEBI" id="CHEBI:57287"/>
        <dbReference type="ChEBI" id="CHEBI:57387"/>
        <dbReference type="ChEBI" id="CHEBI:74554"/>
        <dbReference type="ChEBI" id="CHEBI:74556"/>
    </reaction>
    <physiologicalReaction direction="left-to-right" evidence="2">
        <dbReference type="Rhea" id="RHEA:37152"/>
    </physiologicalReaction>
</comment>
<comment type="catalytic activity">
    <reaction evidence="2">
        <text>1-(5Z,8Z,11Z,14Z-eicosatetraenoyl)-sn-glycero-3-phosphate + (9Z)-octadecenoyl-CoA = 1-(5Z,8Z,11Z,14Z)-eicosatetraenoyl-2-(9Z)-octadecenoyl-sn-glycero-3-phosphate + CoA</text>
        <dbReference type="Rhea" id="RHEA:37455"/>
        <dbReference type="ChEBI" id="CHEBI:57287"/>
        <dbReference type="ChEBI" id="CHEBI:57387"/>
        <dbReference type="ChEBI" id="CHEBI:74938"/>
        <dbReference type="ChEBI" id="CHEBI:74941"/>
    </reaction>
    <physiologicalReaction direction="left-to-right" evidence="2">
        <dbReference type="Rhea" id="RHEA:37456"/>
    </physiologicalReaction>
</comment>
<comment type="catalytic activity">
    <reaction evidence="2">
        <text>1-octadecanoyl-sn-glycero-3-phosphate + (9Z)-octadecenoyl-CoA = 1-octadecanoyl-2-(9Z-octadecenoyl)-sn-glycero-3-phosphate + CoA</text>
        <dbReference type="Rhea" id="RHEA:37163"/>
        <dbReference type="ChEBI" id="CHEBI:57287"/>
        <dbReference type="ChEBI" id="CHEBI:57387"/>
        <dbReference type="ChEBI" id="CHEBI:74560"/>
        <dbReference type="ChEBI" id="CHEBI:74565"/>
    </reaction>
    <physiologicalReaction direction="left-to-right" evidence="2">
        <dbReference type="Rhea" id="RHEA:37164"/>
    </physiologicalReaction>
</comment>
<comment type="catalytic activity">
    <reaction evidence="2">
        <text>1-(9Z-octadecenoyl)-sn-glycero-3-phosphate + (5Z,8Z,11Z,14Z)-eicosatetraenoyl-CoA = 1-(9Z)-octadecenoyl-2-(5Z,8Z,11Z,14Z)-eicosatetraenoyl-sn-glycero-3-phosphate + CoA</text>
        <dbReference type="Rhea" id="RHEA:37443"/>
        <dbReference type="ChEBI" id="CHEBI:57287"/>
        <dbReference type="ChEBI" id="CHEBI:57368"/>
        <dbReference type="ChEBI" id="CHEBI:74544"/>
        <dbReference type="ChEBI" id="CHEBI:74928"/>
    </reaction>
    <physiologicalReaction direction="left-to-right" evidence="2">
        <dbReference type="Rhea" id="RHEA:37444"/>
    </physiologicalReaction>
</comment>
<comment type="catalytic activity">
    <reaction evidence="2">
        <text>heptadecanoyl-CoA + 1-(9Z-octadecenoyl)-sn-glycero-3-phosphate = 1-(9Z)-octadecenoyl-2-heptadecanoyl-sn-glycero-3-phosphate + CoA</text>
        <dbReference type="Rhea" id="RHEA:37155"/>
        <dbReference type="ChEBI" id="CHEBI:57287"/>
        <dbReference type="ChEBI" id="CHEBI:74307"/>
        <dbReference type="ChEBI" id="CHEBI:74544"/>
        <dbReference type="ChEBI" id="CHEBI:74558"/>
    </reaction>
    <physiologicalReaction direction="left-to-right" evidence="2">
        <dbReference type="Rhea" id="RHEA:37156"/>
    </physiologicalReaction>
</comment>
<comment type="catalytic activity">
    <reaction evidence="2">
        <text>1-(9Z-octadecenoyl)-sn-glycero-3-phosphocholine + (5Z,8Z,11Z,14Z)-eicosatetraenoyl-CoA = 1-(9Z)-octadecenoyl-2-(5Z,8Z,11Z,14Z)-icosatetraenoyl-sn-glycero-3-phosphocholine + CoA</text>
        <dbReference type="Rhea" id="RHEA:37395"/>
        <dbReference type="ChEBI" id="CHEBI:28610"/>
        <dbReference type="ChEBI" id="CHEBI:57287"/>
        <dbReference type="ChEBI" id="CHEBI:57368"/>
        <dbReference type="ChEBI" id="CHEBI:74671"/>
    </reaction>
    <physiologicalReaction direction="left-to-right" evidence="2">
        <dbReference type="Rhea" id="RHEA:37396"/>
    </physiologicalReaction>
</comment>
<comment type="catalytic activity">
    <reaction evidence="2">
        <text>1-(9Z-octadecenoyl)-sn-glycero-3-phosphate + (9Z)-octadecenoyl-CoA = 1,2-di-(9Z-octadecenoyl)-sn-glycero-3-phosphate + CoA</text>
        <dbReference type="Rhea" id="RHEA:37131"/>
        <dbReference type="ChEBI" id="CHEBI:57287"/>
        <dbReference type="ChEBI" id="CHEBI:57387"/>
        <dbReference type="ChEBI" id="CHEBI:74544"/>
        <dbReference type="ChEBI" id="CHEBI:74546"/>
    </reaction>
    <physiologicalReaction direction="left-to-right" evidence="2">
        <dbReference type="Rhea" id="RHEA:37132"/>
    </physiologicalReaction>
</comment>
<comment type="catalytic activity">
    <reaction evidence="2">
        <text>1-(9Z-octadecenoyl)-sn-glycero-3-phosphate + hexadecanoyl-CoA = 1-hexadecanoyl-2-(9Z-octadecenoyl)-sn-glycero-3-phosphate + CoA</text>
        <dbReference type="Rhea" id="RHEA:42592"/>
        <dbReference type="ChEBI" id="CHEBI:57287"/>
        <dbReference type="ChEBI" id="CHEBI:57379"/>
        <dbReference type="ChEBI" id="CHEBI:64839"/>
        <dbReference type="ChEBI" id="CHEBI:74544"/>
    </reaction>
    <physiologicalReaction direction="left-to-right" evidence="2">
        <dbReference type="Rhea" id="RHEA:42593"/>
    </physiologicalReaction>
</comment>
<comment type="pathway">
    <text>Phospholipid metabolism; CDP-diacylglycerol biosynthesis; CDP-diacylglycerol from sn-glycerol 3-phosphate: step 2/3.</text>
</comment>
<comment type="subcellular location">
    <subcellularLocation>
        <location evidence="2">Endoplasmic reticulum membrane</location>
        <topology evidence="3">Multi-pass membrane protein</topology>
    </subcellularLocation>
    <subcellularLocation>
        <location evidence="2">Nucleus envelope</location>
    </subcellularLocation>
    <subcellularLocation>
        <location evidence="2">Mitochondrion</location>
    </subcellularLocation>
</comment>
<comment type="tissue specificity">
    <text evidence="4">Widely expressed.</text>
</comment>
<comment type="domain">
    <text evidence="1">The HXXXXD motif is essential for acyltransferase activity and may constitute the binding site for the phosphate moiety of the glycerol-3-phosphate.</text>
</comment>
<comment type="similarity">
    <text evidence="5">Belongs to the 1-acyl-sn-glycerol-3-phosphate acyltransferase family.</text>
</comment>
<comment type="caution">
    <text evidence="5">It is uncertain whether Met-1 or Met-12 is the initiator.</text>
</comment>
<organism>
    <name type="scientific">Mus musculus</name>
    <name type="common">Mouse</name>
    <dbReference type="NCBI Taxonomy" id="10090"/>
    <lineage>
        <taxon>Eukaryota</taxon>
        <taxon>Metazoa</taxon>
        <taxon>Chordata</taxon>
        <taxon>Craniata</taxon>
        <taxon>Vertebrata</taxon>
        <taxon>Euteleostomi</taxon>
        <taxon>Mammalia</taxon>
        <taxon>Eutheria</taxon>
        <taxon>Euarchontoglires</taxon>
        <taxon>Glires</taxon>
        <taxon>Rodentia</taxon>
        <taxon>Myomorpha</taxon>
        <taxon>Muroidea</taxon>
        <taxon>Muridae</taxon>
        <taxon>Murinae</taxon>
        <taxon>Mus</taxon>
        <taxon>Mus</taxon>
    </lineage>
</organism>
<accession>Q9D1E8</accession>
<accession>Q3U702</accession>
<accession>Q8BG61</accession>
<accession>Q8CGN6</accession>